<proteinExistence type="inferred from homology"/>
<name>RECX_CLOBA</name>
<protein>
    <recommendedName>
        <fullName evidence="1">Regulatory protein RecX</fullName>
    </recommendedName>
</protein>
<accession>B2V5E8</accession>
<comment type="function">
    <text evidence="1">Modulates RecA activity.</text>
</comment>
<comment type="subcellular location">
    <subcellularLocation>
        <location evidence="1">Cytoplasm</location>
    </subcellularLocation>
</comment>
<comment type="similarity">
    <text evidence="1">Belongs to the RecX family.</text>
</comment>
<sequence length="212" mass="24697">MAKITKLEVQKRNKERVNVFLDEDYAFSISAELIYKEGIKVKDSVDSEKLKVLANKDAIIKCREAAIKSIERNLKTEKQVRDKLNLKGYDEEAITKAIDFLKEYNFLDDKDYANKFVKDKLKCQGSNKIRYSLMQKGVSKDVIEEELSGIDKENEKENALVLAQKKVNNLRKTESDTYKISNKLYRFLLSKGYGYDIIKDVVKEAMNFEFYD</sequence>
<keyword id="KW-0963">Cytoplasm</keyword>
<organism>
    <name type="scientific">Clostridium botulinum (strain Alaska E43 / Type E3)</name>
    <dbReference type="NCBI Taxonomy" id="508767"/>
    <lineage>
        <taxon>Bacteria</taxon>
        <taxon>Bacillati</taxon>
        <taxon>Bacillota</taxon>
        <taxon>Clostridia</taxon>
        <taxon>Eubacteriales</taxon>
        <taxon>Clostridiaceae</taxon>
        <taxon>Clostridium</taxon>
    </lineage>
</organism>
<gene>
    <name evidence="1" type="primary">recX</name>
    <name type="ordered locus">CLH_2296</name>
</gene>
<evidence type="ECO:0000255" key="1">
    <source>
        <dbReference type="HAMAP-Rule" id="MF_01114"/>
    </source>
</evidence>
<feature type="chain" id="PRO_1000137158" description="Regulatory protein RecX">
    <location>
        <begin position="1"/>
        <end position="212"/>
    </location>
</feature>
<dbReference type="EMBL" id="CP001078">
    <property type="protein sequence ID" value="ACD53541.1"/>
    <property type="molecule type" value="Genomic_DNA"/>
</dbReference>
<dbReference type="RefSeq" id="WP_012451419.1">
    <property type="nucleotide sequence ID" value="NC_010723.1"/>
</dbReference>
<dbReference type="SMR" id="B2V5E8"/>
<dbReference type="KEGG" id="cbt:CLH_2296"/>
<dbReference type="HOGENOM" id="CLU_066607_4_1_9"/>
<dbReference type="GO" id="GO:0005737">
    <property type="term" value="C:cytoplasm"/>
    <property type="evidence" value="ECO:0007669"/>
    <property type="project" value="UniProtKB-SubCell"/>
</dbReference>
<dbReference type="GO" id="GO:0006282">
    <property type="term" value="P:regulation of DNA repair"/>
    <property type="evidence" value="ECO:0007669"/>
    <property type="project" value="UniProtKB-UniRule"/>
</dbReference>
<dbReference type="Gene3D" id="1.10.10.10">
    <property type="entry name" value="Winged helix-like DNA-binding domain superfamily/Winged helix DNA-binding domain"/>
    <property type="match status" value="3"/>
</dbReference>
<dbReference type="HAMAP" id="MF_01114">
    <property type="entry name" value="RecX"/>
    <property type="match status" value="1"/>
</dbReference>
<dbReference type="InterPro" id="IPR053926">
    <property type="entry name" value="RecX_HTH_1st"/>
</dbReference>
<dbReference type="InterPro" id="IPR053924">
    <property type="entry name" value="RecX_HTH_2nd"/>
</dbReference>
<dbReference type="InterPro" id="IPR053925">
    <property type="entry name" value="RecX_HTH_3rd"/>
</dbReference>
<dbReference type="InterPro" id="IPR003783">
    <property type="entry name" value="Regulatory_RecX"/>
</dbReference>
<dbReference type="InterPro" id="IPR036388">
    <property type="entry name" value="WH-like_DNA-bd_sf"/>
</dbReference>
<dbReference type="NCBIfam" id="NF001058">
    <property type="entry name" value="PRK00117.4-1"/>
    <property type="match status" value="1"/>
</dbReference>
<dbReference type="PANTHER" id="PTHR33602">
    <property type="entry name" value="REGULATORY PROTEIN RECX FAMILY PROTEIN"/>
    <property type="match status" value="1"/>
</dbReference>
<dbReference type="PANTHER" id="PTHR33602:SF1">
    <property type="entry name" value="REGULATORY PROTEIN RECX FAMILY PROTEIN"/>
    <property type="match status" value="1"/>
</dbReference>
<dbReference type="Pfam" id="PF21982">
    <property type="entry name" value="RecX_HTH1"/>
    <property type="match status" value="1"/>
</dbReference>
<dbReference type="Pfam" id="PF02631">
    <property type="entry name" value="RecX_HTH2"/>
    <property type="match status" value="1"/>
</dbReference>
<dbReference type="Pfam" id="PF21981">
    <property type="entry name" value="RecX_HTH3"/>
    <property type="match status" value="1"/>
</dbReference>
<reference key="1">
    <citation type="submission" date="2008-05" db="EMBL/GenBank/DDBJ databases">
        <title>Complete genome sequence of Clostridium botulinum E3 str. Alaska E43.</title>
        <authorList>
            <person name="Brinkac L.M."/>
            <person name="Brown J.L."/>
            <person name="Bruce D."/>
            <person name="Detter C."/>
            <person name="Munk C."/>
            <person name="Smith L.A."/>
            <person name="Smith T.J."/>
            <person name="Sutton G."/>
            <person name="Brettin T.S."/>
        </authorList>
    </citation>
    <scope>NUCLEOTIDE SEQUENCE [LARGE SCALE GENOMIC DNA]</scope>
    <source>
        <strain>Alaska E43 / Type E3</strain>
    </source>
</reference>